<keyword id="KW-0444">Lipid biosynthesis</keyword>
<keyword id="KW-0443">Lipid metabolism</keyword>
<keyword id="KW-0489">Methyltransferase</keyword>
<keyword id="KW-1185">Reference proteome</keyword>
<keyword id="KW-0808">Transferase</keyword>
<sequence>MAFSRTHSLLARAGSTSTYKRVWRYWYPLMTRGLGNDEIVFINWAYEEDPPMDLPLEASDEPNRAHINLYHRTATQVDLGGKQVLEVSCGHGGGASYLTRTLHPASYTGLDLNQAGIKLCKKRHRLPGLDFVRGDAENLPFDDESFDVVLNVEASHCYPHFRRFLAEVVRVLRPGGYFPYADLRPNNEIAAWEADLAATPLRQLSQRQINAEVLRGIGNNSQKSRDLVDRHLPAFLRFAGREFIGVQGTQLSRYLEGGELSYRMYCFTKD</sequence>
<proteinExistence type="inferred from homology"/>
<feature type="chain" id="PRO_0000305166" description="Phthiotriol/phenolphthiotriol dimycocerosates methyltransferase">
    <location>
        <begin position="1"/>
        <end position="270"/>
    </location>
</feature>
<gene>
    <name type="ordered locus">MRA_2979</name>
</gene>
<comment type="function">
    <text evidence="1">Catalyzes the methylation of the lipid moiety of the intermediate compounds phthiotriol and glycosylated phenolphthiotriol dimycoserosates to form phthiocerol dimycocerosates (DIM A) and glycosylated phenolphthiocerol dimycocerosates (PGL).</text>
</comment>
<comment type="similarity">
    <text evidence="2">Belongs to the methyltransferase superfamily. Phthiotriol/phenolphthiotriol dimycocerosates methyltransferase family.</text>
</comment>
<dbReference type="EC" id="2.1.1.-"/>
<dbReference type="EMBL" id="CP000611">
    <property type="protein sequence ID" value="ABQ74760.1"/>
    <property type="molecule type" value="Genomic_DNA"/>
</dbReference>
<dbReference type="RefSeq" id="WP_003414900.1">
    <property type="nucleotide sequence ID" value="NZ_CP016972.1"/>
</dbReference>
<dbReference type="SMR" id="A5U6W0"/>
<dbReference type="KEGG" id="mra:MRA_2979"/>
<dbReference type="eggNOG" id="COG2226">
    <property type="taxonomic scope" value="Bacteria"/>
</dbReference>
<dbReference type="HOGENOM" id="CLU_068661_0_0_11"/>
<dbReference type="Proteomes" id="UP000001988">
    <property type="component" value="Chromosome"/>
</dbReference>
<dbReference type="GO" id="GO:0008757">
    <property type="term" value="F:S-adenosylmethionine-dependent methyltransferase activity"/>
    <property type="evidence" value="ECO:0007669"/>
    <property type="project" value="InterPro"/>
</dbReference>
<dbReference type="GO" id="GO:0006629">
    <property type="term" value="P:lipid metabolic process"/>
    <property type="evidence" value="ECO:0007669"/>
    <property type="project" value="UniProtKB-KW"/>
</dbReference>
<dbReference type="GO" id="GO:0032259">
    <property type="term" value="P:methylation"/>
    <property type="evidence" value="ECO:0007669"/>
    <property type="project" value="UniProtKB-KW"/>
</dbReference>
<dbReference type="CDD" id="cd02440">
    <property type="entry name" value="AdoMet_MTases"/>
    <property type="match status" value="1"/>
</dbReference>
<dbReference type="FunFam" id="3.40.50.150:FF:000444">
    <property type="entry name" value="Phthiotriol/phenolphthiotriol dimycocerosates methyltransferase"/>
    <property type="match status" value="1"/>
</dbReference>
<dbReference type="Gene3D" id="3.40.50.150">
    <property type="entry name" value="Vaccinia Virus protein VP39"/>
    <property type="match status" value="1"/>
</dbReference>
<dbReference type="InterPro" id="IPR013216">
    <property type="entry name" value="Methyltransf_11"/>
</dbReference>
<dbReference type="InterPro" id="IPR050508">
    <property type="entry name" value="Methyltransf_Superfamily"/>
</dbReference>
<dbReference type="InterPro" id="IPR054877">
    <property type="entry name" value="PthPhpthDimycoMt"/>
</dbReference>
<dbReference type="InterPro" id="IPR029063">
    <property type="entry name" value="SAM-dependent_MTases_sf"/>
</dbReference>
<dbReference type="NCBIfam" id="NF045823">
    <property type="entry name" value="PthPhpthDimycoMt"/>
    <property type="match status" value="1"/>
</dbReference>
<dbReference type="PANTHER" id="PTHR42912">
    <property type="entry name" value="METHYLTRANSFERASE"/>
    <property type="match status" value="1"/>
</dbReference>
<dbReference type="PANTHER" id="PTHR42912:SF93">
    <property type="entry name" value="N6-ADENOSINE-METHYLTRANSFERASE TMT1A"/>
    <property type="match status" value="1"/>
</dbReference>
<dbReference type="Pfam" id="PF08241">
    <property type="entry name" value="Methyltransf_11"/>
    <property type="match status" value="1"/>
</dbReference>
<dbReference type="SUPFAM" id="SSF53335">
    <property type="entry name" value="S-adenosyl-L-methionine-dependent methyltransferases"/>
    <property type="match status" value="1"/>
</dbReference>
<accession>A5U6W0</accession>
<evidence type="ECO:0000250" key="1"/>
<evidence type="ECO:0000305" key="2"/>
<reference key="1">
    <citation type="journal article" date="2008" name="PLoS ONE">
        <title>Genetic basis of virulence attenuation revealed by comparative genomic analysis of Mycobacterium tuberculosis strain H37Ra versus H37Rv.</title>
        <authorList>
            <person name="Zheng H."/>
            <person name="Lu L."/>
            <person name="Wang B."/>
            <person name="Pu S."/>
            <person name="Zhang X."/>
            <person name="Zhu G."/>
            <person name="Shi W."/>
            <person name="Zhang L."/>
            <person name="Wang H."/>
            <person name="Wang S."/>
            <person name="Zhao G."/>
            <person name="Zhang Y."/>
        </authorList>
    </citation>
    <scope>NUCLEOTIDE SEQUENCE [LARGE SCALE GENOMIC DNA]</scope>
    <source>
        <strain>ATCC 25177 / H37Ra</strain>
    </source>
</reference>
<protein>
    <recommendedName>
        <fullName>Phthiotriol/phenolphthiotriol dimycocerosates methyltransferase</fullName>
        <ecNumber>2.1.1.-</ecNumber>
    </recommendedName>
</protein>
<organism>
    <name type="scientific">Mycobacterium tuberculosis (strain ATCC 25177 / H37Ra)</name>
    <dbReference type="NCBI Taxonomy" id="419947"/>
    <lineage>
        <taxon>Bacteria</taxon>
        <taxon>Bacillati</taxon>
        <taxon>Actinomycetota</taxon>
        <taxon>Actinomycetes</taxon>
        <taxon>Mycobacteriales</taxon>
        <taxon>Mycobacteriaceae</taxon>
        <taxon>Mycobacterium</taxon>
        <taxon>Mycobacterium tuberculosis complex</taxon>
    </lineage>
</organism>
<name>PHMT_MYCTA</name>